<feature type="chain" id="PRO_0000051468" description="Zinc finger protein 106">
    <location>
        <begin position="1"/>
        <end position="1888"/>
    </location>
</feature>
<feature type="repeat" description="WD 1">
    <location>
        <begin position="1534"/>
        <end position="1573"/>
    </location>
</feature>
<feature type="repeat" description="WD 2">
    <location>
        <begin position="1575"/>
        <end position="1618"/>
    </location>
</feature>
<feature type="repeat" description="WD 3">
    <location>
        <begin position="1659"/>
        <end position="1700"/>
    </location>
</feature>
<feature type="repeat" description="WD 4">
    <location>
        <begin position="1703"/>
        <end position="1742"/>
    </location>
</feature>
<feature type="repeat" description="WD 5">
    <location>
        <begin position="1743"/>
        <end position="1780"/>
    </location>
</feature>
<feature type="repeat" description="WD 6">
    <location>
        <begin position="1783"/>
        <end position="1820"/>
    </location>
</feature>
<feature type="zinc finger region" description="C2H2-type 1; atypical">
    <location>
        <begin position="5"/>
        <end position="29"/>
    </location>
</feature>
<feature type="zinc finger region" description="C2H2-type 2; atypical">
    <location>
        <begin position="43"/>
        <end position="67"/>
    </location>
</feature>
<feature type="zinc finger region" description="C2H2-type 3; atypical">
    <location>
        <begin position="1818"/>
        <end position="1843"/>
    </location>
</feature>
<feature type="region of interest" description="Disordered" evidence="2">
    <location>
        <begin position="68"/>
        <end position="187"/>
    </location>
</feature>
<feature type="region of interest" description="Disordered" evidence="2">
    <location>
        <begin position="287"/>
        <end position="326"/>
    </location>
</feature>
<feature type="region of interest" description="Disordered" evidence="2">
    <location>
        <begin position="338"/>
        <end position="362"/>
    </location>
</feature>
<feature type="region of interest" description="Disordered" evidence="2">
    <location>
        <begin position="410"/>
        <end position="437"/>
    </location>
</feature>
<feature type="region of interest" description="Disordered" evidence="2">
    <location>
        <begin position="453"/>
        <end position="525"/>
    </location>
</feature>
<feature type="region of interest" description="Disordered" evidence="2">
    <location>
        <begin position="537"/>
        <end position="617"/>
    </location>
</feature>
<feature type="region of interest" description="Disordered" evidence="2">
    <location>
        <begin position="635"/>
        <end position="661"/>
    </location>
</feature>
<feature type="region of interest" description="Disordered" evidence="2">
    <location>
        <begin position="696"/>
        <end position="728"/>
    </location>
</feature>
<feature type="region of interest" description="Disordered" evidence="2">
    <location>
        <begin position="894"/>
        <end position="920"/>
    </location>
</feature>
<feature type="region of interest" description="Disordered" evidence="2">
    <location>
        <begin position="968"/>
        <end position="1064"/>
    </location>
</feature>
<feature type="region of interest" description="Disordered" evidence="2">
    <location>
        <begin position="1281"/>
        <end position="1461"/>
    </location>
</feature>
<feature type="region of interest" description="Disordered" evidence="2">
    <location>
        <begin position="1468"/>
        <end position="1487"/>
    </location>
</feature>
<feature type="region of interest" description="Disordered" evidence="2">
    <location>
        <begin position="1509"/>
        <end position="1531"/>
    </location>
</feature>
<feature type="compositionally biased region" description="Acidic residues" evidence="2">
    <location>
        <begin position="75"/>
        <end position="89"/>
    </location>
</feature>
<feature type="compositionally biased region" description="Basic and acidic residues" evidence="2">
    <location>
        <begin position="90"/>
        <end position="108"/>
    </location>
</feature>
<feature type="compositionally biased region" description="Basic and acidic residues" evidence="2">
    <location>
        <begin position="118"/>
        <end position="138"/>
    </location>
</feature>
<feature type="compositionally biased region" description="Basic and acidic residues" evidence="2">
    <location>
        <begin position="150"/>
        <end position="160"/>
    </location>
</feature>
<feature type="compositionally biased region" description="Polar residues" evidence="2">
    <location>
        <begin position="161"/>
        <end position="175"/>
    </location>
</feature>
<feature type="compositionally biased region" description="Basic and acidic residues" evidence="2">
    <location>
        <begin position="296"/>
        <end position="311"/>
    </location>
</feature>
<feature type="compositionally biased region" description="Polar residues" evidence="2">
    <location>
        <begin position="342"/>
        <end position="357"/>
    </location>
</feature>
<feature type="compositionally biased region" description="Basic residues" evidence="2">
    <location>
        <begin position="481"/>
        <end position="491"/>
    </location>
</feature>
<feature type="compositionally biased region" description="Polar residues" evidence="2">
    <location>
        <begin position="507"/>
        <end position="525"/>
    </location>
</feature>
<feature type="compositionally biased region" description="Polar residues" evidence="2">
    <location>
        <begin position="551"/>
        <end position="572"/>
    </location>
</feature>
<feature type="compositionally biased region" description="Basic and acidic residues" evidence="2">
    <location>
        <begin position="577"/>
        <end position="593"/>
    </location>
</feature>
<feature type="compositionally biased region" description="Polar residues" evidence="2">
    <location>
        <begin position="597"/>
        <end position="613"/>
    </location>
</feature>
<feature type="compositionally biased region" description="Polar residues" evidence="2">
    <location>
        <begin position="644"/>
        <end position="661"/>
    </location>
</feature>
<feature type="compositionally biased region" description="Polar residues" evidence="2">
    <location>
        <begin position="904"/>
        <end position="920"/>
    </location>
</feature>
<feature type="compositionally biased region" description="Basic and acidic residues" evidence="2">
    <location>
        <begin position="968"/>
        <end position="986"/>
    </location>
</feature>
<feature type="compositionally biased region" description="Low complexity" evidence="2">
    <location>
        <begin position="992"/>
        <end position="1008"/>
    </location>
</feature>
<feature type="compositionally biased region" description="Polar residues" evidence="2">
    <location>
        <begin position="1013"/>
        <end position="1022"/>
    </location>
</feature>
<feature type="compositionally biased region" description="Basic residues" evidence="2">
    <location>
        <begin position="1050"/>
        <end position="1060"/>
    </location>
</feature>
<feature type="compositionally biased region" description="Polar residues" evidence="2">
    <location>
        <begin position="1281"/>
        <end position="1296"/>
    </location>
</feature>
<feature type="compositionally biased region" description="Low complexity" evidence="2">
    <location>
        <begin position="1312"/>
        <end position="1321"/>
    </location>
</feature>
<feature type="compositionally biased region" description="Polar residues" evidence="2">
    <location>
        <begin position="1338"/>
        <end position="1354"/>
    </location>
</feature>
<feature type="compositionally biased region" description="Basic residues" evidence="2">
    <location>
        <begin position="1360"/>
        <end position="1373"/>
    </location>
</feature>
<feature type="compositionally biased region" description="Basic and acidic residues" evidence="2">
    <location>
        <begin position="1450"/>
        <end position="1461"/>
    </location>
</feature>
<feature type="compositionally biased region" description="Polar residues" evidence="2">
    <location>
        <begin position="1470"/>
        <end position="1487"/>
    </location>
</feature>
<feature type="modified residue" description="Phosphoserine" evidence="1">
    <location>
        <position position="657"/>
    </location>
</feature>
<feature type="modified residue" description="Phosphoserine" evidence="1">
    <location>
        <position position="677"/>
    </location>
</feature>
<feature type="modified residue" description="Phosphoserine" evidence="17">
    <location>
        <position position="876"/>
    </location>
</feature>
<feature type="modified residue" description="Phosphoserine" evidence="17">
    <location>
        <position position="878"/>
    </location>
</feature>
<feature type="modified residue" description="Phosphoserine" evidence="1">
    <location>
        <position position="881"/>
    </location>
</feature>
<feature type="modified residue" description="Phosphoserine" evidence="1">
    <location>
        <position position="909"/>
    </location>
</feature>
<feature type="modified residue" description="Phosphoserine" evidence="17">
    <location>
        <position position="953"/>
    </location>
</feature>
<feature type="modified residue" description="Phosphothreonine" evidence="1">
    <location>
        <position position="1036"/>
    </location>
</feature>
<feature type="modified residue" description="Phosphoserine" evidence="17">
    <location>
        <position position="1040"/>
    </location>
</feature>
<feature type="modified residue" description="Phosphoserine" evidence="17">
    <location>
        <position position="1041"/>
    </location>
</feature>
<feature type="modified residue" description="Phosphoserine" evidence="1">
    <location>
        <position position="1046"/>
    </location>
</feature>
<feature type="modified residue" description="Phosphoserine" evidence="17">
    <location>
        <position position="1291"/>
    </location>
</feature>
<feature type="modified residue" description="Phosphoserine" evidence="16">
    <location>
        <position position="1293"/>
    </location>
</feature>
<feature type="modified residue" description="Phosphoserine" evidence="17">
    <location>
        <position position="1296"/>
    </location>
</feature>
<feature type="modified residue" description="Phosphoserine" evidence="1">
    <location>
        <position position="1313"/>
    </location>
</feature>
<feature type="modified residue" description="Phosphoserine" evidence="17">
    <location>
        <position position="1339"/>
    </location>
</feature>
<feature type="modified residue" description="Phosphoserine" evidence="17">
    <location>
        <position position="1381"/>
    </location>
</feature>
<feature type="modified residue" description="Phosphothreonine" evidence="17">
    <location>
        <position position="1383"/>
    </location>
</feature>
<feature type="modified residue" description="Phosphoserine" evidence="1">
    <location>
        <position position="1474"/>
    </location>
</feature>
<feature type="cross-link" description="Glycyl lysine isopeptide (Lys-Gly) (interchain with G-Cter in SUMO2)" evidence="1">
    <location>
        <position position="91"/>
    </location>
</feature>
<feature type="cross-link" description="Glycyl lysine isopeptide (Lys-Gly) (interchain with G-Cter in SUMO2)" evidence="1">
    <location>
        <position position="155"/>
    </location>
</feature>
<feature type="cross-link" description="Glycyl lysine isopeptide (Lys-Gly) (interchain with G-Cter in SUMO2)" evidence="1">
    <location>
        <position position="265"/>
    </location>
</feature>
<feature type="cross-link" description="Glycyl lysine isopeptide (Lys-Gly) (interchain with G-Cter in SUMO2)" evidence="1">
    <location>
        <position position="309"/>
    </location>
</feature>
<feature type="cross-link" description="Glycyl lysine isopeptide (Lys-Gly) (interchain with G-Cter in SUMO2)" evidence="1">
    <location>
        <position position="375"/>
    </location>
</feature>
<feature type="cross-link" description="Glycyl lysine isopeptide (Lys-Gly) (interchain with G-Cter in SUMO2)" evidence="1">
    <location>
        <position position="384"/>
    </location>
</feature>
<feature type="cross-link" description="Glycyl lysine isopeptide (Lys-Gly) (interchain with G-Cter in SUMO2)" evidence="1">
    <location>
        <position position="390"/>
    </location>
</feature>
<feature type="cross-link" description="Glycyl lysine isopeptide (Lys-Gly) (interchain with G-Cter in SUMO2)" evidence="1">
    <location>
        <position position="435"/>
    </location>
</feature>
<feature type="cross-link" description="Glycyl lysine isopeptide (Lys-Gly) (interchain with G-Cter in SUMO2)" evidence="1">
    <location>
        <position position="469"/>
    </location>
</feature>
<feature type="cross-link" description="Glycyl lysine isopeptide (Lys-Gly) (interchain with G-Cter in SUMO2)" evidence="1">
    <location>
        <position position="479"/>
    </location>
</feature>
<feature type="cross-link" description="Glycyl lysine isopeptide (Lys-Gly) (interchain with G-Cter in SUMO2)" evidence="1">
    <location>
        <position position="524"/>
    </location>
</feature>
<feature type="cross-link" description="Glycyl lysine isopeptide (Lys-Gly) (interchain with G-Cter in SUMO2)" evidence="1">
    <location>
        <position position="534"/>
    </location>
</feature>
<feature type="cross-link" description="Glycyl lysine isopeptide (Lys-Gly) (interchain with G-Cter in SUMO2)" evidence="1">
    <location>
        <position position="544"/>
    </location>
</feature>
<feature type="cross-link" description="Glycyl lysine isopeptide (Lys-Gly) (interchain with G-Cter in SUMO2)" evidence="1">
    <location>
        <position position="577"/>
    </location>
</feature>
<feature type="cross-link" description="Glycyl lysine isopeptide (Lys-Gly) (interchain with G-Cter in SUMO2)" evidence="1">
    <location>
        <position position="620"/>
    </location>
</feature>
<feature type="cross-link" description="Glycyl lysine isopeptide (Lys-Gly) (interchain with G-Cter in SUMO2)" evidence="1">
    <location>
        <position position="687"/>
    </location>
</feature>
<feature type="cross-link" description="Glycyl lysine isopeptide (Lys-Gly) (interchain with G-Cter in SUMO2)" evidence="1">
    <location>
        <position position="700"/>
    </location>
</feature>
<feature type="cross-link" description="Glycyl lysine isopeptide (Lys-Gly) (interchain with G-Cter in SUMO2)" evidence="1">
    <location>
        <position position="721"/>
    </location>
</feature>
<feature type="cross-link" description="Glycyl lysine isopeptide (Lys-Gly) (interchain with G-Cter in SUMO2)" evidence="1">
    <location>
        <position position="738"/>
    </location>
</feature>
<feature type="cross-link" description="Glycyl lysine isopeptide (Lys-Gly) (interchain with G-Cter in SUMO2)" evidence="1">
    <location>
        <position position="758"/>
    </location>
</feature>
<feature type="cross-link" description="Glycyl lysine isopeptide (Lys-Gly) (interchain with G-Cter in SUMO2)" evidence="1">
    <location>
        <position position="792"/>
    </location>
</feature>
<feature type="cross-link" description="Glycyl lysine isopeptide (Lys-Gly) (interchain with G-Cter in SUMO2)" evidence="1">
    <location>
        <position position="824"/>
    </location>
</feature>
<feature type="cross-link" description="Glycyl lysine isopeptide (Lys-Gly) (interchain with G-Cter in SUMO2)" evidence="1">
    <location>
        <position position="921"/>
    </location>
</feature>
<feature type="cross-link" description="Glycyl lysine isopeptide (Lys-Gly) (interchain with G-Cter in SUMO2)" evidence="1">
    <location>
        <position position="1310"/>
    </location>
</feature>
<feature type="cross-link" description="Glycyl lysine isopeptide (Lys-Gly) (interchain with G-Cter in SUMO2)" evidence="1">
    <location>
        <position position="1335"/>
    </location>
</feature>
<feature type="cross-link" description="Glycyl lysine isopeptide (Lys-Gly) (interchain with G-Cter in SUMO2)" evidence="1">
    <location>
        <position position="1391"/>
    </location>
</feature>
<feature type="cross-link" description="Glycyl lysine isopeptide (Lys-Gly) (interchain with G-Cter in SUMO2)" evidence="1">
    <location>
        <position position="1403"/>
    </location>
</feature>
<feature type="cross-link" description="Glycyl lysine isopeptide (Lys-Gly) (interchain with G-Cter in SUMO2)" evidence="1">
    <location>
        <position position="1406"/>
    </location>
</feature>
<feature type="cross-link" description="Glycyl lysine isopeptide (Lys-Gly) (interchain with G-Cter in SUMO2)" evidence="1">
    <location>
        <position position="1460"/>
    </location>
</feature>
<feature type="cross-link" description="Glycyl lysine isopeptide (Lys-Gly) (interchain with G-Cter in SUMO2)" evidence="1">
    <location>
        <position position="1492"/>
    </location>
</feature>
<feature type="cross-link" description="Glycyl lysine isopeptide (Lys-Gly) (interchain with G-Cter in SUMO2)" evidence="1">
    <location>
        <position position="1509"/>
    </location>
</feature>
<feature type="cross-link" description="Glycyl lysine isopeptide (Lys-Gly) (interchain with G-Cter in SUMO2)" evidence="1">
    <location>
        <position position="1590"/>
    </location>
</feature>
<feature type="cross-link" description="Glycyl lysine isopeptide (Lys-Gly) (interchain with G-Cter in SUMO2)" evidence="1">
    <location>
        <position position="1742"/>
    </location>
</feature>
<feature type="cross-link" description="Glycyl lysine isopeptide (Lys-Gly) (interchain with G-Cter in SUMO2)" evidence="1">
    <location>
        <position position="1869"/>
    </location>
</feature>
<feature type="splice variant" id="VSP_011438" description="In isoform 3." evidence="10">
    <original>FGIEMVPLVQN</original>
    <variation>CVPLIPVLGFF</variation>
    <location>
        <begin position="829"/>
        <end position="839"/>
    </location>
</feature>
<feature type="splice variant" id="VSP_011439" description="In isoform 3." evidence="10">
    <location>
        <begin position="840"/>
        <end position="1888"/>
    </location>
</feature>
<feature type="splice variant" id="VSP_011440" description="In isoform 2." evidence="9">
    <original>RV</original>
    <variation>SK</variation>
    <location>
        <begin position="1245"/>
        <end position="1246"/>
    </location>
</feature>
<feature type="splice variant" id="VSP_011441" description="In isoform 2." evidence="9">
    <location>
        <begin position="1247"/>
        <end position="1888"/>
    </location>
</feature>
<feature type="sequence variant" description="In strain: C57BL/6 and Swiss Webster.">
    <original>G</original>
    <variation>S</variation>
    <location>
        <position position="253"/>
    </location>
</feature>
<feature type="sequence variant" description="In strain: C57BL/6 and Swiss Webster.">
    <original>L</original>
    <variation>P</variation>
    <location>
        <position position="262"/>
    </location>
</feature>
<feature type="sequence variant" description="In strain: Swiss Webster.">
    <original>G</original>
    <variation>D</variation>
    <location>
        <position position="269"/>
    </location>
</feature>
<feature type="sequence variant" description="In strain: Swiss Webster.">
    <original>S</original>
    <variation>T</variation>
    <location>
        <position position="293"/>
    </location>
</feature>
<feature type="sequence variant" description="In strain: C57BL/6 and Swiss Webster.">
    <original>A</original>
    <variation>P</variation>
    <location>
        <position position="447"/>
    </location>
</feature>
<feature type="sequence variant" description="In strain: C57BL/6 and Swiss Webster.">
    <original>S</original>
    <variation>P</variation>
    <location>
        <position position="451"/>
    </location>
</feature>
<feature type="sequence variant" description="In strain: C57BL/6 and Swiss Webster.">
    <original>L</original>
    <variation>R</variation>
    <location>
        <position position="526"/>
    </location>
</feature>
<feature type="sequence variant" description="In strain: C57BL/6.">
    <original>N</original>
    <variation>S</variation>
    <location>
        <position position="552"/>
    </location>
</feature>
<feature type="sequence variant" description="In strain: C57BL/6.">
    <original>M</original>
    <variation>T</variation>
    <location>
        <position position="579"/>
    </location>
</feature>
<feature type="sequence variant" description="In strain: C57BL/10.">
    <original>T</original>
    <variation>A</variation>
    <location>
        <position position="656"/>
    </location>
</feature>
<feature type="sequence variant" description="In strain: C57BL/10.">
    <original>R</original>
    <variation>C</variation>
    <location>
        <position position="659"/>
    </location>
</feature>
<feature type="sequence variant" description="In strain: C57BL/10.">
    <original>D</original>
    <variation>N</variation>
    <location>
        <position position="685"/>
    </location>
</feature>
<feature type="sequence variant" description="In strain: Swiss Webster.">
    <original>E</original>
    <variation>G</variation>
    <location>
        <position position="706"/>
    </location>
</feature>
<feature type="sequence variant" description="In strain: Swiss Webster.">
    <original>E</original>
    <variation>G</variation>
    <location>
        <position position="711"/>
    </location>
</feature>
<feature type="sequence variant" description="In strain: C57BL/10.">
    <original>T</original>
    <variation>A</variation>
    <location>
        <position position="717"/>
    </location>
</feature>
<feature type="sequence variant" description="In strain: 129/J.">
    <original>S</original>
    <variation>C</variation>
    <location>
        <position position="778"/>
    </location>
</feature>
<feature type="sequence variant" description="In strain: C57BL/6.">
    <original>S</original>
    <variation>T</variation>
    <location>
        <position position="996"/>
    </location>
</feature>
<feature type="sequence variant" description="In strain: C57BL/6." evidence="4">
    <original>P</original>
    <variation>S</variation>
    <location>
        <position position="1188"/>
    </location>
</feature>
<feature type="sequence variant" description="In strain: C57BL/6.">
    <original>MSTF</original>
    <variation>TCTL</variation>
    <location>
        <begin position="1196"/>
        <end position="1199"/>
    </location>
</feature>
<feature type="sequence conflict" description="In Ref. 3; AAH25424." evidence="11" ref="3">
    <location>
        <position position="19"/>
    </location>
</feature>
<feature type="sequence conflict" description="In Ref. 1; AAD04329." evidence="11" ref="1">
    <original>S</original>
    <variation>P</variation>
    <location>
        <position position="1263"/>
    </location>
</feature>
<feature type="sequence conflict" description="In Ref. 1; AAD04327." evidence="11" ref="1">
    <original>I</original>
    <variation>V</variation>
    <location>
        <position position="1608"/>
    </location>
</feature>
<proteinExistence type="evidence at protein level"/>
<accession>O88466</accession>
<accession>A2AKH3</accession>
<accession>O55185</accession>
<accession>O88465</accession>
<accession>O88467</accession>
<accession>Q792M1</accession>
<accession>Q792P4</accession>
<accession>Q8CDZ8</accession>
<accession>Q8R3I4</accession>
<accession>Q9ESU3</accession>
<protein>
    <recommendedName>
        <fullName>Zinc finger protein 106</fullName>
        <shortName>Zfp-106</shortName>
    </recommendedName>
    <alternativeName>
        <fullName>H3a minor histocompatibility antigen</fullName>
    </alternativeName>
    <alternativeName>
        <fullName>Son of insulin receptor mutant</fullName>
    </alternativeName>
    <alternativeName>
        <fullName>Zinc finger protein 474</fullName>
    </alternativeName>
</protein>
<organism>
    <name type="scientific">Mus musculus</name>
    <name type="common">Mouse</name>
    <dbReference type="NCBI Taxonomy" id="10090"/>
    <lineage>
        <taxon>Eukaryota</taxon>
        <taxon>Metazoa</taxon>
        <taxon>Chordata</taxon>
        <taxon>Craniata</taxon>
        <taxon>Vertebrata</taxon>
        <taxon>Euteleostomi</taxon>
        <taxon>Mammalia</taxon>
        <taxon>Eutheria</taxon>
        <taxon>Euarchontoglires</taxon>
        <taxon>Glires</taxon>
        <taxon>Rodentia</taxon>
        <taxon>Myomorpha</taxon>
        <taxon>Muroidea</taxon>
        <taxon>Muridae</taxon>
        <taxon>Murinae</taxon>
        <taxon>Mus</taxon>
        <taxon>Mus</taxon>
    </lineage>
</organism>
<name>ZN106_MOUSE</name>
<keyword id="KW-0025">Alternative splicing</keyword>
<keyword id="KW-1017">Isopeptide bond</keyword>
<keyword id="KW-0479">Metal-binding</keyword>
<keyword id="KW-0539">Nucleus</keyword>
<keyword id="KW-0597">Phosphoprotein</keyword>
<keyword id="KW-1185">Reference proteome</keyword>
<keyword id="KW-0677">Repeat</keyword>
<keyword id="KW-0694">RNA-binding</keyword>
<keyword id="KW-0832">Ubl conjugation</keyword>
<keyword id="KW-0853">WD repeat</keyword>
<keyword id="KW-0862">Zinc</keyword>
<keyword id="KW-0863">Zinc-finger</keyword>
<comment type="function">
    <text evidence="5 6 7">RNA-binding protein (PubMed:27418600, PubMed:28072389). Specifically binds to 5'-GGGGCC-3' sequence repeats in RNA (PubMed:28072389). Essential for maintenance of peripheral motor neuron and skeletal muscle function (PubMed:26604141, PubMed:27418600, PubMed:28072389). Required for normal expression and/or alternative splicing of a number of genes in spinal cord and skeletal muscle, including the neurite outgrowth inhibitor RTN4 (PubMed:26604141, PubMed:27418600). Also contributes to normal mitochondrial respiratory function in motor neurons, via an unknown mechanism (PubMed:26604141).</text>
</comment>
<comment type="subunit">
    <text evidence="3 6 7 8">Interacts with KNOP1 (PubMed:15833274). Interacts with TARDBP and NUP107 (PubMed:28072389). Interacts (via N-terminus) with RBM39 (PubMed:27418600). Interacts with the SH3 domains of FYN and GRB2 (PubMed:9507006).</text>
</comment>
<comment type="subcellular location">
    <subcellularLocation>
        <location evidence="3 6 7 8">Nucleus</location>
        <location evidence="3 6 7 8">Nucleolus</location>
    </subcellularLocation>
    <subcellularLocation>
        <location evidence="6 7">Nucleus speckle</location>
    </subcellularLocation>
    <text evidence="6">Colocalizes with RBM39 in nuclear speckles. Inhibition of RNA synthesis, or overexpression of KNOP1, induces translocation from nuclear speckles to the nucleolus.</text>
</comment>
<comment type="alternative products">
    <event type="alternative splicing"/>
    <isoform>
        <id>O88466-1</id>
        <name>1</name>
        <sequence type="displayed"/>
    </isoform>
    <isoform>
        <id>O88466-2</id>
        <name>2</name>
        <sequence type="described" ref="VSP_011440 VSP_011441"/>
    </isoform>
    <isoform>
        <id>O88466-3</id>
        <name>3</name>
        <sequence type="described" ref="VSP_011438 VSP_011439"/>
    </isoform>
</comment>
<comment type="tissue specificity">
    <text evidence="5 6 7 8">Widely expressed, with strongest expression in skeletal muscle, heart and brain (at protein level) (PubMed:26604141, PubMed:27418600, PubMed:28072389, PubMed:9507006). Detected in spinal cord motor neurons (PubMed:28072389).</text>
</comment>
<comment type="developmental stage">
    <text evidence="6">During embryonic stages 12.5 dpc and 15.5 dpc, highly expressed in skeletal muscle and cardiac tissue.</text>
</comment>
<comment type="induction">
    <molecule>Isoform 3</molecule>
    <text evidence="8">Down-regulated in response to insulin.</text>
</comment>
<comment type="PTM">
    <text evidence="8">Phosphorylated by FYN in vitro.</text>
</comment>
<comment type="miscellaneous">
    <molecule>Isoform 2</molecule>
    <text evidence="11">May be due to an intron retention.</text>
</comment>
<comment type="miscellaneous">
    <molecule>Isoform 3</molecule>
    <text evidence="11">May be due to an intron retention.</text>
</comment>
<comment type="sequence caution" evidence="11">
    <conflict type="frameshift">
        <sequence resource="EMBL-CDS" id="AAB96870"/>
    </conflict>
</comment>
<comment type="sequence caution" evidence="11">
    <conflict type="erroneous initiation">
        <sequence resource="EMBL-CDS" id="BAC26389"/>
    </conflict>
</comment>
<evidence type="ECO:0000250" key="1">
    <source>
        <dbReference type="UniProtKB" id="Q9H2Y7"/>
    </source>
</evidence>
<evidence type="ECO:0000256" key="2">
    <source>
        <dbReference type="SAM" id="MobiDB-lite"/>
    </source>
</evidence>
<evidence type="ECO:0000269" key="3">
    <source>
    </source>
</evidence>
<evidence type="ECO:0000269" key="4">
    <source>
    </source>
</evidence>
<evidence type="ECO:0000269" key="5">
    <source>
    </source>
</evidence>
<evidence type="ECO:0000269" key="6">
    <source>
    </source>
</evidence>
<evidence type="ECO:0000269" key="7">
    <source>
    </source>
</evidence>
<evidence type="ECO:0000269" key="8">
    <source>
    </source>
</evidence>
<evidence type="ECO:0000303" key="9">
    <source>
    </source>
</evidence>
<evidence type="ECO:0000303" key="10">
    <source>
    </source>
</evidence>
<evidence type="ECO:0000305" key="11"/>
<evidence type="ECO:0000312" key="12">
    <source>
        <dbReference type="EMBL" id="AAD04327.1"/>
    </source>
</evidence>
<evidence type="ECO:0000312" key="13">
    <source>
        <dbReference type="EMBL" id="AAD04328.1"/>
    </source>
</evidence>
<evidence type="ECO:0000312" key="14">
    <source>
        <dbReference type="EMBL" id="AAD04329.1"/>
    </source>
</evidence>
<evidence type="ECO:0000312" key="15">
    <source>
        <dbReference type="EMBL" id="AAD04330.1"/>
    </source>
</evidence>
<evidence type="ECO:0007744" key="16">
    <source>
    </source>
</evidence>
<evidence type="ECO:0007744" key="17">
    <source>
    </source>
</evidence>
<sequence length="1888" mass="208964">MVRERKCILCHIVYGSKKEMDEHMRSMLHHRELENLKGRDISHECRVCRVTEVGLSAYAKHISGQLHKDNVDAQEREDDGKEEEEEEYFDKELVQLIQERKEQSRQDEPPSNSQEVNSDDRQPQWRREDRIPYQDRESYSQPPRHHRGPPQRDWKWEKDGFNSTRKNSFPHSLRNSGGPRGSSVWHKGATRGSSTWFLNHSNSGGGWHSNNGMVDWNYNGTGRNSSWHSEGTGGFPSWHMNNSNGNWKSSVRGTNSWNYNGLGDKFQQGRNRNPNYQMEDMTKMWNKKSNKPSKYSQERCKWQRQDRDKAAKYRSPPEGYASDTFPSEGLLEFNFEQRESQTTKQTDTAASKINGKNGTKARDKFRRWTPYPSQKTLDLQSALKEVIGSKSDTLEKPLFNFSLITAGLRKPVDKTSNPPVIKTQKAGPPGSPSHKAISDGTAFCEVARACSITEQSEPHQKSNKIPLLKSPLLPLPTPKSGPHKQNLKNRSKNKETKSFPSGDHSHLLNTSTLEGSHGSSYTSKSLGLCPRVLKENKTVSGTQKEPDEKLNNTSQKAQDTVLQCPKTLQNPLPTTPKRMENDAKESSVEESAKDSLSIESQPHSAGNSAMTSDAENHGIKSEGVASLTTEVVSCSTHTVDKEQGSQIPGTPENLSTSPRNSTVLQKEAEVQVSAATSPHSGLLLDLKTSLEDAQDNNLVKSDGPFETESFEDTSLDTELQKPDLNNQPPGTLLPELSKLGFPASLQRDLSRHISLKSKTGTHLPEPNLNSARRIRNVSGHRKNETEKESGLKPTLRQILNASRRNVNWEQVIQQVTKKKQELGKGLPRFGIEMVPLVQNEQEVLDLDEEPDLSSLEGFQWEGVSIPSSSGLARKRSLSESSVVMDRAPVYSFFTGEGTGKENEAQQSPSPNTALSAAQSQKTAMYLEQEVAPLTPSVGTGERVGNIPTQRRHSAQLPSGHIMPVMHSARDLHSQERSTPLSERHAQESTGEGNSLSSNASSGHAVSSLADAATDSSCTSGAEQTDGHSIRKKRRATGDGSSPELPSLERKNKRRKIKGKKERSQVDQLLTISLREEELSKSLQCMDNKLLQARAALQTAYVEVQRLLVLKQQITVEMSALRTHRIQILQGLQETYEPPEHPDQAPCSLISREQRNSRSQTSFETALLPAPFFPGFLDPPPSHASLPSPGNPLQITMSTFQAHGTAPDSSVQIKQEPMSPEQEGNMNALPQGCASNVSKELLQTNRVVDDGSSVYPAIPAVIASESTENCQEVSKDLNFSVEQGNSRSKGNSPSCQSPDLPGINRGEETAKGSSGSEACSSSFLRLSFTPETPAEKETQSPADQPEQQAESTLASAETRGSKKKKKLRKKKTLRATHVPENSDTEQDVFTAKPARKVKTAKAAKGAKVTTSQTGQEQGTARDEPDSDSSLEVLEVTNPQLEVVAIDTSESGDEKPDSPSKKDAWIAAEQNPIETSRSGCDEVSSTSELGTRYKDGVPVSVAETQTVISIKASKHSSEISSEPGDDEEPTEGSFEGHQAAVNAIQIFGNFLYTCSADTTVRVYNLVSRKCVGVFEGHTSKVNCLLVTHTSGKSSVLYTGSSDHTIRCYNIKTRECMEQLQLEDRVLCLHNRWRTLYAGLANGTVVTFDIKNNKRQEIFECHGPRAVSCLATAQEGARKLLVVGSYDCTISVRDARNGLLLRTLEGHSKTVLCMKVVNDLVFSGSSDQSVHAHNIHTGELVRIYKGHNHAVTVVNILGKVMVTACLDKFVRVYELQSHDRLQVYGGHKDMIMCMTIHKSVIYTGCYDGSIQAVRLNLMQNYRCWWYGCTLIFGVVDHLKQHLLTDHTNPNFQTLKCRWRNCDAFFTARKGSKQDVAGHIERHAEDDSKIDS</sequence>
<dbReference type="EMBL" id="AF067397">
    <property type="protein sequence ID" value="AAD04340.1"/>
    <property type="molecule type" value="Genomic_DNA"/>
</dbReference>
<dbReference type="EMBL" id="AF067398">
    <property type="protein sequence ID" value="AAD04341.1"/>
    <property type="molecule type" value="Genomic_DNA"/>
</dbReference>
<dbReference type="EMBL" id="AF067399">
    <property type="protein sequence ID" value="AAD04342.1"/>
    <property type="molecule type" value="Genomic_DNA"/>
</dbReference>
<dbReference type="EMBL" id="AL772299">
    <property type="status" value="NOT_ANNOTATED_CDS"/>
    <property type="molecule type" value="Genomic_DNA"/>
</dbReference>
<dbReference type="EMBL" id="AL935121">
    <property type="status" value="NOT_ANNOTATED_CDS"/>
    <property type="molecule type" value="Genomic_DNA"/>
</dbReference>
<dbReference type="EMBL" id="AF060243">
    <property type="protein sequence ID" value="AAG27479.1"/>
    <property type="molecule type" value="Genomic_DNA"/>
</dbReference>
<dbReference type="EMBL" id="AF060242">
    <property type="protein sequence ID" value="AAG27479.1"/>
    <property type="status" value="JOINED"/>
    <property type="molecule type" value="Genomic_DNA"/>
</dbReference>
<dbReference type="EMBL" id="AF060244">
    <property type="protein sequence ID" value="AAD04327.1"/>
    <property type="molecule type" value="mRNA"/>
</dbReference>
<dbReference type="EMBL" id="AF060245">
    <property type="protein sequence ID" value="AAD04328.1"/>
    <property type="molecule type" value="mRNA"/>
</dbReference>
<dbReference type="EMBL" id="AF060246">
    <property type="protein sequence ID" value="AAD04329.1"/>
    <property type="molecule type" value="mRNA"/>
</dbReference>
<dbReference type="EMBL" id="AF060247">
    <property type="protein sequence ID" value="AAD04330.1"/>
    <property type="molecule type" value="mRNA"/>
</dbReference>
<dbReference type="EMBL" id="BC025424">
    <property type="protein sequence ID" value="AAH25424.1"/>
    <property type="molecule type" value="mRNA"/>
</dbReference>
<dbReference type="EMBL" id="U59739">
    <property type="protein sequence ID" value="AAB96870.1"/>
    <property type="status" value="ALT_FRAME"/>
    <property type="molecule type" value="mRNA"/>
</dbReference>
<dbReference type="EMBL" id="AK029313">
    <property type="protein sequence ID" value="BAC26389.1"/>
    <property type="status" value="ALT_INIT"/>
    <property type="molecule type" value="mRNA"/>
</dbReference>
<dbReference type="CCDS" id="CCDS16621.1">
    <molecule id="O88466-1"/>
</dbReference>
<dbReference type="PIR" id="T14273">
    <property type="entry name" value="T14273"/>
</dbReference>
<dbReference type="SMR" id="O88466"/>
<dbReference type="BioGRID" id="203204">
    <property type="interactions" value="6"/>
</dbReference>
<dbReference type="FunCoup" id="O88466">
    <property type="interactions" value="338"/>
</dbReference>
<dbReference type="STRING" id="10090.ENSMUSP00000055602"/>
<dbReference type="GlyGen" id="O88466">
    <property type="glycosylation" value="1 site, 1 O-linked glycan (1 site)"/>
</dbReference>
<dbReference type="iPTMnet" id="O88466"/>
<dbReference type="PhosphoSitePlus" id="O88466"/>
<dbReference type="SwissPalm" id="O88466"/>
<dbReference type="jPOST" id="O88466"/>
<dbReference type="PaxDb" id="10090-ENSMUSP00000055602"/>
<dbReference type="PeptideAtlas" id="O88466"/>
<dbReference type="ProteomicsDB" id="275274">
    <molecule id="O88466-1"/>
</dbReference>
<dbReference type="ProteomicsDB" id="275275">
    <molecule id="O88466-2"/>
</dbReference>
<dbReference type="ProteomicsDB" id="275276">
    <molecule id="O88466-3"/>
</dbReference>
<dbReference type="Pumba" id="O88466"/>
<dbReference type="AGR" id="MGI:1270153"/>
<dbReference type="MGI" id="MGI:1270153">
    <property type="gene designation" value="Zfp106"/>
</dbReference>
<dbReference type="eggNOG" id="KOG1721">
    <property type="taxonomic scope" value="Eukaryota"/>
</dbReference>
<dbReference type="InParanoid" id="O88466"/>
<dbReference type="TreeFam" id="TF105569"/>
<dbReference type="ChiTaRS" id="Zfp106">
    <property type="organism name" value="mouse"/>
</dbReference>
<dbReference type="PRO" id="PR:O88466"/>
<dbReference type="Proteomes" id="UP000000589">
    <property type="component" value="Unplaced"/>
</dbReference>
<dbReference type="RNAct" id="O88466">
    <property type="molecule type" value="protein"/>
</dbReference>
<dbReference type="GO" id="GO:0005829">
    <property type="term" value="C:cytosol"/>
    <property type="evidence" value="ECO:0000314"/>
    <property type="project" value="MGI"/>
</dbReference>
<dbReference type="GO" id="GO:0016020">
    <property type="term" value="C:membrane"/>
    <property type="evidence" value="ECO:0000314"/>
    <property type="project" value="MGI"/>
</dbReference>
<dbReference type="GO" id="GO:0016607">
    <property type="term" value="C:nuclear speck"/>
    <property type="evidence" value="ECO:0007669"/>
    <property type="project" value="UniProtKB-SubCell"/>
</dbReference>
<dbReference type="GO" id="GO:0005730">
    <property type="term" value="C:nucleolus"/>
    <property type="evidence" value="ECO:0007669"/>
    <property type="project" value="UniProtKB-SubCell"/>
</dbReference>
<dbReference type="GO" id="GO:0001515">
    <property type="term" value="F:opioid peptide activity"/>
    <property type="evidence" value="ECO:0000353"/>
    <property type="project" value="MGI"/>
</dbReference>
<dbReference type="GO" id="GO:0003723">
    <property type="term" value="F:RNA binding"/>
    <property type="evidence" value="ECO:0007669"/>
    <property type="project" value="UniProtKB-KW"/>
</dbReference>
<dbReference type="GO" id="GO:0017124">
    <property type="term" value="F:SH3 domain binding"/>
    <property type="evidence" value="ECO:0000314"/>
    <property type="project" value="MGI"/>
</dbReference>
<dbReference type="GO" id="GO:0008270">
    <property type="term" value="F:zinc ion binding"/>
    <property type="evidence" value="ECO:0007669"/>
    <property type="project" value="UniProtKB-KW"/>
</dbReference>
<dbReference type="GO" id="GO:0008286">
    <property type="term" value="P:insulin receptor signaling pathway"/>
    <property type="evidence" value="ECO:0000314"/>
    <property type="project" value="MGI"/>
</dbReference>
<dbReference type="CDD" id="cd00200">
    <property type="entry name" value="WD40"/>
    <property type="match status" value="1"/>
</dbReference>
<dbReference type="FunFam" id="2.130.10.10:FF:000195">
    <property type="entry name" value="Zinc finger protein 106"/>
    <property type="match status" value="1"/>
</dbReference>
<dbReference type="FunFam" id="2.130.10.10:FF:000114">
    <property type="entry name" value="zinc finger protein 106 isoform X1"/>
    <property type="match status" value="1"/>
</dbReference>
<dbReference type="Gene3D" id="2.130.10.10">
    <property type="entry name" value="YVTN repeat-like/Quinoprotein amine dehydrogenase"/>
    <property type="match status" value="2"/>
</dbReference>
<dbReference type="InterPro" id="IPR018391">
    <property type="entry name" value="PQQ_b-propeller_rpt"/>
</dbReference>
<dbReference type="InterPro" id="IPR015943">
    <property type="entry name" value="WD40/YVTN_repeat-like_dom_sf"/>
</dbReference>
<dbReference type="InterPro" id="IPR036322">
    <property type="entry name" value="WD40_repeat_dom_sf"/>
</dbReference>
<dbReference type="InterPro" id="IPR001680">
    <property type="entry name" value="WD40_rpt"/>
</dbReference>
<dbReference type="InterPro" id="IPR042622">
    <property type="entry name" value="Znf106"/>
</dbReference>
<dbReference type="InterPro" id="IPR013087">
    <property type="entry name" value="Znf_C2H2_type"/>
</dbReference>
<dbReference type="PANTHER" id="PTHR14435">
    <property type="entry name" value="ZINC FINGER PROTEIN 106"/>
    <property type="match status" value="1"/>
</dbReference>
<dbReference type="PANTHER" id="PTHR14435:SF2">
    <property type="entry name" value="ZINC FINGER PROTEIN 106"/>
    <property type="match status" value="1"/>
</dbReference>
<dbReference type="Pfam" id="PF00400">
    <property type="entry name" value="WD40"/>
    <property type="match status" value="4"/>
</dbReference>
<dbReference type="SMART" id="SM00564">
    <property type="entry name" value="PQQ"/>
    <property type="match status" value="4"/>
</dbReference>
<dbReference type="SMART" id="SM00320">
    <property type="entry name" value="WD40"/>
    <property type="match status" value="6"/>
</dbReference>
<dbReference type="SMART" id="SM00355">
    <property type="entry name" value="ZnF_C2H2"/>
    <property type="match status" value="4"/>
</dbReference>
<dbReference type="SUPFAM" id="SSF50978">
    <property type="entry name" value="WD40 repeat-like"/>
    <property type="match status" value="1"/>
</dbReference>
<dbReference type="PROSITE" id="PS50082">
    <property type="entry name" value="WD_REPEATS_2"/>
    <property type="match status" value="2"/>
</dbReference>
<dbReference type="PROSITE" id="PS50294">
    <property type="entry name" value="WD_REPEATS_REGION"/>
    <property type="match status" value="1"/>
</dbReference>
<dbReference type="PROSITE" id="PS00028">
    <property type="entry name" value="ZINC_FINGER_C2H2_1"/>
    <property type="match status" value="2"/>
</dbReference>
<gene>
    <name type="primary">Znf106</name>
    <name type="synonym">H3a</name>
    <name type="synonym">Sh3bp3</name>
    <name type="synonym">Sirm</name>
    <name type="synonym">Zfp106</name>
    <name type="synonym">Znf474</name>
</gene>
<reference key="1">
    <citation type="journal article" date="1998" name="Immunity">
        <title>Positional cloning and molecular characterization of an immunodominant cytotoxic determinant of the mouse H3 minor histocompatibility complex.</title>
        <authorList>
            <person name="Zuberi A.R."/>
            <person name="Christianson G.J."/>
            <person name="Mendoza L.M."/>
            <person name="Shastri N."/>
            <person name="Roopenian D.C."/>
        </authorList>
    </citation>
    <scope>NUCLEOTIDE SEQUENCE [GENOMIC DNA / MRNA] (ISOFORM 1)</scope>
    <scope>VARIANTS</scope>
    <source>
        <strain>129/J</strain>
        <strain>BALB/cJ</strain>
        <strain>C57BL/10</strain>
        <strain>C57BL/6 X DBA/2</strain>
        <strain>C57BL/6J</strain>
        <tissue evidence="13">Embryo</tissue>
        <tissue evidence="15">Lymphoblast</tissue>
        <tissue evidence="12">T-cell</tissue>
        <tissue evidence="14">Thymic lymphoma</tissue>
    </source>
</reference>
<reference key="2">
    <citation type="journal article" date="2009" name="PLoS Biol.">
        <title>Lineage-specific biology revealed by a finished genome assembly of the mouse.</title>
        <authorList>
            <person name="Church D.M."/>
            <person name="Goodstadt L."/>
            <person name="Hillier L.W."/>
            <person name="Zody M.C."/>
            <person name="Goldstein S."/>
            <person name="She X."/>
            <person name="Bult C.J."/>
            <person name="Agarwala R."/>
            <person name="Cherry J.L."/>
            <person name="DiCuccio M."/>
            <person name="Hlavina W."/>
            <person name="Kapustin Y."/>
            <person name="Meric P."/>
            <person name="Maglott D."/>
            <person name="Birtle Z."/>
            <person name="Marques A.C."/>
            <person name="Graves T."/>
            <person name="Zhou S."/>
            <person name="Teague B."/>
            <person name="Potamousis K."/>
            <person name="Churas C."/>
            <person name="Place M."/>
            <person name="Herschleb J."/>
            <person name="Runnheim R."/>
            <person name="Forrest D."/>
            <person name="Amos-Landgraf J."/>
            <person name="Schwartz D.C."/>
            <person name="Cheng Z."/>
            <person name="Lindblad-Toh K."/>
            <person name="Eichler E.E."/>
            <person name="Ponting C.P."/>
        </authorList>
    </citation>
    <scope>NUCLEOTIDE SEQUENCE [LARGE SCALE GENOMIC DNA]</scope>
    <scope>VARIANT SER-1188</scope>
    <source>
        <strain>C57BL/6J</strain>
    </source>
</reference>
<reference key="3">
    <citation type="journal article" date="2004" name="Genome Res.">
        <title>The status, quality, and expansion of the NIH full-length cDNA project: the Mammalian Gene Collection (MGC).</title>
        <authorList>
            <consortium name="The MGC Project Team"/>
        </authorList>
    </citation>
    <scope>NUCLEOTIDE SEQUENCE [LARGE SCALE MRNA] (ISOFORM 2)</scope>
    <source>
        <strain>FVB/N</strain>
        <tissue>Mammary gland</tissue>
    </source>
</reference>
<reference key="4">
    <citation type="journal article" date="1998" name="J. Biol. Chem.">
        <title>Identification of sirm, a novel insulin-regulated SH3 binding protein that associates with Grb-2 and FYN.</title>
        <authorList>
            <person name="Salvatore P."/>
            <person name="Hanash C.R."/>
            <person name="Kido Y."/>
            <person name="Imai Y."/>
            <person name="Accili D."/>
        </authorList>
    </citation>
    <scope>NUCLEOTIDE SEQUENCE [MRNA] OF 186-1888 (ISOFORM 3)</scope>
    <scope>INTERACTION WITH FYN AND GRB2</scope>
    <scope>TISSUE SPECIFICITY</scope>
    <scope>INDUCTION</scope>
    <scope>PHOSPHORYLATION</scope>
    <scope>VARIANTS</scope>
    <source>
        <strain>Swiss Webster</strain>
    </source>
</reference>
<reference key="5">
    <citation type="journal article" date="2005" name="Science">
        <title>The transcriptional landscape of the mammalian genome.</title>
        <authorList>
            <person name="Carninci P."/>
            <person name="Kasukawa T."/>
            <person name="Katayama S."/>
            <person name="Gough J."/>
            <person name="Frith M.C."/>
            <person name="Maeda N."/>
            <person name="Oyama R."/>
            <person name="Ravasi T."/>
            <person name="Lenhard B."/>
            <person name="Wells C."/>
            <person name="Kodzius R."/>
            <person name="Shimokawa K."/>
            <person name="Bajic V.B."/>
            <person name="Brenner S.E."/>
            <person name="Batalov S."/>
            <person name="Forrest A.R."/>
            <person name="Zavolan M."/>
            <person name="Davis M.J."/>
            <person name="Wilming L.G."/>
            <person name="Aidinis V."/>
            <person name="Allen J.E."/>
            <person name="Ambesi-Impiombato A."/>
            <person name="Apweiler R."/>
            <person name="Aturaliya R.N."/>
            <person name="Bailey T.L."/>
            <person name="Bansal M."/>
            <person name="Baxter L."/>
            <person name="Beisel K.W."/>
            <person name="Bersano T."/>
            <person name="Bono H."/>
            <person name="Chalk A.M."/>
            <person name="Chiu K.P."/>
            <person name="Choudhary V."/>
            <person name="Christoffels A."/>
            <person name="Clutterbuck D.R."/>
            <person name="Crowe M.L."/>
            <person name="Dalla E."/>
            <person name="Dalrymple B.P."/>
            <person name="de Bono B."/>
            <person name="Della Gatta G."/>
            <person name="di Bernardo D."/>
            <person name="Down T."/>
            <person name="Engstrom P."/>
            <person name="Fagiolini M."/>
            <person name="Faulkner G."/>
            <person name="Fletcher C.F."/>
            <person name="Fukushima T."/>
            <person name="Furuno M."/>
            <person name="Futaki S."/>
            <person name="Gariboldi M."/>
            <person name="Georgii-Hemming P."/>
            <person name="Gingeras T.R."/>
            <person name="Gojobori T."/>
            <person name="Green R.E."/>
            <person name="Gustincich S."/>
            <person name="Harbers M."/>
            <person name="Hayashi Y."/>
            <person name="Hensch T.K."/>
            <person name="Hirokawa N."/>
            <person name="Hill D."/>
            <person name="Huminiecki L."/>
            <person name="Iacono M."/>
            <person name="Ikeo K."/>
            <person name="Iwama A."/>
            <person name="Ishikawa T."/>
            <person name="Jakt M."/>
            <person name="Kanapin A."/>
            <person name="Katoh M."/>
            <person name="Kawasawa Y."/>
            <person name="Kelso J."/>
            <person name="Kitamura H."/>
            <person name="Kitano H."/>
            <person name="Kollias G."/>
            <person name="Krishnan S.P."/>
            <person name="Kruger A."/>
            <person name="Kummerfeld S.K."/>
            <person name="Kurochkin I.V."/>
            <person name="Lareau L.F."/>
            <person name="Lazarevic D."/>
            <person name="Lipovich L."/>
            <person name="Liu J."/>
            <person name="Liuni S."/>
            <person name="McWilliam S."/>
            <person name="Madan Babu M."/>
            <person name="Madera M."/>
            <person name="Marchionni L."/>
            <person name="Matsuda H."/>
            <person name="Matsuzawa S."/>
            <person name="Miki H."/>
            <person name="Mignone F."/>
            <person name="Miyake S."/>
            <person name="Morris K."/>
            <person name="Mottagui-Tabar S."/>
            <person name="Mulder N."/>
            <person name="Nakano N."/>
            <person name="Nakauchi H."/>
            <person name="Ng P."/>
            <person name="Nilsson R."/>
            <person name="Nishiguchi S."/>
            <person name="Nishikawa S."/>
            <person name="Nori F."/>
            <person name="Ohara O."/>
            <person name="Okazaki Y."/>
            <person name="Orlando V."/>
            <person name="Pang K.C."/>
            <person name="Pavan W.J."/>
            <person name="Pavesi G."/>
            <person name="Pesole G."/>
            <person name="Petrovsky N."/>
            <person name="Piazza S."/>
            <person name="Reed J."/>
            <person name="Reid J.F."/>
            <person name="Ring B.Z."/>
            <person name="Ringwald M."/>
            <person name="Rost B."/>
            <person name="Ruan Y."/>
            <person name="Salzberg S.L."/>
            <person name="Sandelin A."/>
            <person name="Schneider C."/>
            <person name="Schoenbach C."/>
            <person name="Sekiguchi K."/>
            <person name="Semple C.A."/>
            <person name="Seno S."/>
            <person name="Sessa L."/>
            <person name="Sheng Y."/>
            <person name="Shibata Y."/>
            <person name="Shimada H."/>
            <person name="Shimada K."/>
            <person name="Silva D."/>
            <person name="Sinclair B."/>
            <person name="Sperling S."/>
            <person name="Stupka E."/>
            <person name="Sugiura K."/>
            <person name="Sultana R."/>
            <person name="Takenaka Y."/>
            <person name="Taki K."/>
            <person name="Tammoja K."/>
            <person name="Tan S.L."/>
            <person name="Tang S."/>
            <person name="Taylor M.S."/>
            <person name="Tegner J."/>
            <person name="Teichmann S.A."/>
            <person name="Ueda H.R."/>
            <person name="van Nimwegen E."/>
            <person name="Verardo R."/>
            <person name="Wei C.L."/>
            <person name="Yagi K."/>
            <person name="Yamanishi H."/>
            <person name="Zabarovsky E."/>
            <person name="Zhu S."/>
            <person name="Zimmer A."/>
            <person name="Hide W."/>
            <person name="Bult C."/>
            <person name="Grimmond S.M."/>
            <person name="Teasdale R.D."/>
            <person name="Liu E.T."/>
            <person name="Brusic V."/>
            <person name="Quackenbush J."/>
            <person name="Wahlestedt C."/>
            <person name="Mattick J.S."/>
            <person name="Hume D.A."/>
            <person name="Kai C."/>
            <person name="Sasaki D."/>
            <person name="Tomaru Y."/>
            <person name="Fukuda S."/>
            <person name="Kanamori-Katayama M."/>
            <person name="Suzuki M."/>
            <person name="Aoki J."/>
            <person name="Arakawa T."/>
            <person name="Iida J."/>
            <person name="Imamura K."/>
            <person name="Itoh M."/>
            <person name="Kato T."/>
            <person name="Kawaji H."/>
            <person name="Kawagashira N."/>
            <person name="Kawashima T."/>
            <person name="Kojima M."/>
            <person name="Kondo S."/>
            <person name="Konno H."/>
            <person name="Nakano K."/>
            <person name="Ninomiya N."/>
            <person name="Nishio T."/>
            <person name="Okada M."/>
            <person name="Plessy C."/>
            <person name="Shibata K."/>
            <person name="Shiraki T."/>
            <person name="Suzuki S."/>
            <person name="Tagami M."/>
            <person name="Waki K."/>
            <person name="Watahiki A."/>
            <person name="Okamura-Oho Y."/>
            <person name="Suzuki H."/>
            <person name="Kawai J."/>
            <person name="Hayashizaki Y."/>
        </authorList>
    </citation>
    <scope>NUCLEOTIDE SEQUENCE [LARGE SCALE MRNA] OF 1567-1888 (ISOFORM 1)</scope>
    <source>
        <strain>C57BL/6J</strain>
        <tissue>Head</tissue>
    </source>
</reference>
<reference key="6">
    <citation type="journal article" date="2005" name="Int. J. Biochem. Cell Biol.">
        <title>Subcellular recruitment by TSG118 and TSPYL implicates a role for zinc finger protein 106 in a novel developmental pathway.</title>
        <authorList>
            <person name="Grasberger H."/>
            <person name="Bell G.I."/>
        </authorList>
    </citation>
    <scope>INTERACTION WITH KNOP1</scope>
    <scope>SUBCELLULAR LOCATION</scope>
</reference>
<reference key="7">
    <citation type="journal article" date="2007" name="Proc. Natl. Acad. Sci. U.S.A.">
        <title>Large-scale phosphorylation analysis of mouse liver.</title>
        <authorList>
            <person name="Villen J."/>
            <person name="Beausoleil S.A."/>
            <person name="Gerber S.A."/>
            <person name="Gygi S.P."/>
        </authorList>
    </citation>
    <scope>PHOSPHORYLATION [LARGE SCALE ANALYSIS] AT SER-1293</scope>
    <scope>IDENTIFICATION BY MASS SPECTROMETRY [LARGE SCALE ANALYSIS]</scope>
    <source>
        <tissue>Liver</tissue>
    </source>
</reference>
<reference key="8">
    <citation type="journal article" date="2010" name="Cell">
        <title>A tissue-specific atlas of mouse protein phosphorylation and expression.</title>
        <authorList>
            <person name="Huttlin E.L."/>
            <person name="Jedrychowski M.P."/>
            <person name="Elias J.E."/>
            <person name="Goswami T."/>
            <person name="Rad R."/>
            <person name="Beausoleil S.A."/>
            <person name="Villen J."/>
            <person name="Haas W."/>
            <person name="Sowa M.E."/>
            <person name="Gygi S.P."/>
        </authorList>
    </citation>
    <scope>PHOSPHORYLATION [LARGE SCALE ANALYSIS] AT SER-876; SER-878; SER-953; SER-1040; SER-1041; SER-1291; SER-1296; SER-1339; SER-1381 AND THR-1383</scope>
    <scope>IDENTIFICATION BY MASS SPECTROMETRY [LARGE SCALE ANALYSIS]</scope>
    <source>
        <tissue>Brown adipose tissue</tissue>
        <tissue>Heart</tissue>
        <tissue>Kidney</tissue>
        <tissue>Lung</tissue>
        <tissue>Pancreas</tissue>
        <tissue>Spleen</tissue>
        <tissue>Testis</tissue>
    </source>
</reference>
<reference key="9">
    <citation type="journal article" date="2016" name="Hum. Mol. Genet.">
        <title>Deficiency of the zinc finger protein ZFP106 causes motor and sensory neurodegeneration.</title>
        <authorList>
            <person name="Joyce P.I."/>
            <person name="Fratta P."/>
            <person name="Landman A.S."/>
            <person name="Mcgoldrick P."/>
            <person name="Wackerhage H."/>
            <person name="Groves M."/>
            <person name="Busam B.S."/>
            <person name="Galino J."/>
            <person name="Corrochano S."/>
            <person name="Beskina O.A."/>
            <person name="Esapa C."/>
            <person name="Ryder E."/>
            <person name="Carter S."/>
            <person name="Stewart M."/>
            <person name="Codner G."/>
            <person name="Hilton H."/>
            <person name="Teboul L."/>
            <person name="Tucker J."/>
            <person name="Lionikas A."/>
            <person name="Estabel J."/>
            <person name="Ramirez-Solis R."/>
            <person name="White J.K."/>
            <person name="Brandner S."/>
            <person name="Plagnol V."/>
            <person name="Bennet D.L."/>
            <person name="Abramov A.Y."/>
            <person name="Greensmith L."/>
            <person name="Fisher E.M."/>
            <person name="Acevedo-Arozena A."/>
        </authorList>
    </citation>
    <scope>FUNCTION</scope>
    <scope>TISSUE SPECIFICITY</scope>
</reference>
<reference key="10">
    <citation type="journal article" date="2016" name="Proc. Natl. Acad. Sci. U.S.A.">
        <title>Severe muscle wasting and denervation in mice lacking the RNA-binding protein ZFP106.</title>
        <authorList>
            <person name="Anderson D.M."/>
            <person name="Cannavino J."/>
            <person name="Li H."/>
            <person name="Anderson K.M."/>
            <person name="Nelson B.R."/>
            <person name="McAnally J."/>
            <person name="Bezprozvannaya S."/>
            <person name="Liu Y."/>
            <person name="Lin W."/>
            <person name="Liu N."/>
            <person name="Bassel-Duby R."/>
            <person name="Olson E.N."/>
        </authorList>
    </citation>
    <scope>FUNCTION</scope>
    <scope>INTERACTION WITH RBM39</scope>
    <scope>SUBCELLULAR LOCATION</scope>
    <scope>TISSUE SPECIFICITY</scope>
    <scope>DEVELOPMENTAL STAGE</scope>
</reference>
<reference key="11">
    <citation type="journal article" date="2017" name="Elife">
        <title>Suppression of C9orf72 RNA repeat-induced neurotoxicity by the ALS-associated RNA-binding protein Zfp106.</title>
        <authorList>
            <person name="Celona B."/>
            <person name="Dollen J.V."/>
            <person name="Vatsavayai S.C."/>
            <person name="Kashima R."/>
            <person name="Johnson J.R."/>
            <person name="Tang A.A."/>
            <person name="Hata A."/>
            <person name="Miller B.L."/>
            <person name="Huang E.J."/>
            <person name="Krogan N.J."/>
            <person name="Seeley W.W."/>
            <person name="Black B.L."/>
        </authorList>
    </citation>
    <scope>FUNCTION</scope>
    <scope>INTERACTION WITH TARDBP AND NUP107</scope>
    <scope>SUBCELLULAR LOCATION</scope>
    <scope>TISSUE SPECIFICITY</scope>
</reference>